<feature type="chain" id="PRO_0000046797" description="Popeye domain-containing protein 3">
    <location>
        <begin position="1"/>
        <end position="305"/>
    </location>
</feature>
<feature type="transmembrane region" description="Helical" evidence="3">
    <location>
        <begin position="34"/>
        <end position="54"/>
    </location>
</feature>
<feature type="transmembrane region" description="Helical" evidence="3">
    <location>
        <begin position="55"/>
        <end position="75"/>
    </location>
</feature>
<feature type="transmembrane region" description="Helical" evidence="3">
    <location>
        <begin position="77"/>
        <end position="99"/>
    </location>
</feature>
<feature type="region of interest" description="Disordered" evidence="4">
    <location>
        <begin position="273"/>
        <end position="305"/>
    </location>
</feature>
<feature type="glycosylation site" description="N-linked (GlcNAc...) asparagine" evidence="3">
    <location>
        <position position="4"/>
    </location>
</feature>
<feature type="glycosylation site" description="N-linked (GlcNAc...) asparagine" evidence="3">
    <location>
        <position position="298"/>
    </location>
</feature>
<reference key="1">
    <citation type="journal article" date="2000" name="Dev. Biol.">
        <title>Isolation and characterization of the novel popeye gene family expressed in skeletal muscle and heart.</title>
        <authorList>
            <person name="Andree B."/>
            <person name="Hillemann T."/>
            <person name="Kessler-Icekson G."/>
            <person name="Schmitt-John T."/>
            <person name="Jockusch H."/>
            <person name="Arnold H.-H."/>
            <person name="Brand T."/>
        </authorList>
    </citation>
    <scope>NUCLEOTIDE SEQUENCE [MRNA]</scope>
    <scope>POSSIBLE FUNCTION</scope>
    <scope>ALTERNATIVE SPLICING</scope>
    <scope>DEVELOPMENTAL STAGE</scope>
    <scope>TISSUE SPECIFICITY</scope>
    <source>
        <strain>White leghorn</strain>
    </source>
</reference>
<sequence>MGENASFWESLIYAHPTCVTWKQEAEGSIYHLASILFVVGFMGGSGFSGLLYVFSLLGLGFLCSSVWAWLDVCAADIFSWNFILFAICFVQFIYVTYQVRSVSFDKEFQELYSALFQPLGISLTVYRKIVLCCDAEVITLEKEHCYAMQGKTPIDKLSLLVSGRIRVTVDGEFLHYIFPLQFLDSPEWDSLRPTEEGIFQVTLTAETDCRYVAWRRKKLYLLFAKHRFISRLFSILIGSDIAEKLYALNDRVHVGKGFRYDIRLPNFYHTSLPETPPVPPPRRLQRRSSGRPRPGVPNCSSPRKQ</sequence>
<gene>
    <name type="primary">POPDC3</name>
    <name type="synonym">POP3</name>
</gene>
<dbReference type="EMBL" id="AF204170">
    <property type="protein sequence ID" value="AAG23403.1"/>
    <property type="molecule type" value="mRNA"/>
</dbReference>
<dbReference type="RefSeq" id="NP_990028.1">
    <molecule id="Q9DG25-1"/>
    <property type="nucleotide sequence ID" value="NM_204697.2"/>
</dbReference>
<dbReference type="SMR" id="Q9DG25"/>
<dbReference type="GlyCosmos" id="Q9DG25">
    <property type="glycosylation" value="2 sites, No reported glycans"/>
</dbReference>
<dbReference type="GlyGen" id="Q9DG25">
    <property type="glycosylation" value="2 sites"/>
</dbReference>
<dbReference type="PaxDb" id="9031-ENSGALP00000036460"/>
<dbReference type="Ensembl" id="ENSGALT00000110597">
    <molecule id="Q9DG25-1"/>
    <property type="protein sequence ID" value="ENSGALP00000078798"/>
    <property type="gene ID" value="ENSGALG00000015410"/>
</dbReference>
<dbReference type="Ensembl" id="ENSGALT00010032085.1">
    <molecule id="Q9DG25-1"/>
    <property type="protein sequence ID" value="ENSGALP00010018875.1"/>
    <property type="gene ID" value="ENSGALG00010013335.1"/>
</dbReference>
<dbReference type="GeneID" id="395434"/>
<dbReference type="KEGG" id="gga:395434"/>
<dbReference type="CTD" id="64208"/>
<dbReference type="VEuPathDB" id="HostDB:geneid_395434"/>
<dbReference type="eggNOG" id="ENOG502QWBZ">
    <property type="taxonomic scope" value="Eukaryota"/>
</dbReference>
<dbReference type="GeneTree" id="ENSGT00390000002563"/>
<dbReference type="HOGENOM" id="CLU_048494_2_1_1"/>
<dbReference type="InParanoid" id="Q9DG25"/>
<dbReference type="OMA" id="TSWKQEA"/>
<dbReference type="OrthoDB" id="425611at2759"/>
<dbReference type="PRO" id="PR:Q9DG25"/>
<dbReference type="Proteomes" id="UP000000539">
    <property type="component" value="Chromosome 3"/>
</dbReference>
<dbReference type="GO" id="GO:0016020">
    <property type="term" value="C:membrane"/>
    <property type="evidence" value="ECO:0007669"/>
    <property type="project" value="UniProtKB-SubCell"/>
</dbReference>
<dbReference type="GO" id="GO:0030552">
    <property type="term" value="F:cAMP binding"/>
    <property type="evidence" value="ECO:0007669"/>
    <property type="project" value="UniProtKB-KW"/>
</dbReference>
<dbReference type="GO" id="GO:0042391">
    <property type="term" value="P:regulation of membrane potential"/>
    <property type="evidence" value="ECO:0007669"/>
    <property type="project" value="Ensembl"/>
</dbReference>
<dbReference type="InterPro" id="IPR018490">
    <property type="entry name" value="cNMP-bd_dom_sf"/>
</dbReference>
<dbReference type="InterPro" id="IPR006916">
    <property type="entry name" value="POPDC1-3"/>
</dbReference>
<dbReference type="InterPro" id="IPR055272">
    <property type="entry name" value="POPDC1-3_dom"/>
</dbReference>
<dbReference type="PANTHER" id="PTHR12101">
    <property type="entry name" value="POPEYE DOMAIN CONTAINING PROTEIN"/>
    <property type="match status" value="1"/>
</dbReference>
<dbReference type="PANTHER" id="PTHR12101:SF18">
    <property type="entry name" value="POPEYE DOMAIN-CONTAINING PROTEIN 3"/>
    <property type="match status" value="1"/>
</dbReference>
<dbReference type="Pfam" id="PF04831">
    <property type="entry name" value="POPDC1-3"/>
    <property type="match status" value="1"/>
</dbReference>
<dbReference type="SUPFAM" id="SSF51206">
    <property type="entry name" value="cAMP-binding domain-like"/>
    <property type="match status" value="1"/>
</dbReference>
<name>POPD3_CHICK</name>
<evidence type="ECO:0000250" key="1">
    <source>
        <dbReference type="UniProtKB" id="Q9ES81"/>
    </source>
</evidence>
<evidence type="ECO:0000250" key="2">
    <source>
        <dbReference type="UniProtKB" id="Q9HBV1"/>
    </source>
</evidence>
<evidence type="ECO:0000255" key="3"/>
<evidence type="ECO:0000256" key="4">
    <source>
        <dbReference type="SAM" id="MobiDB-lite"/>
    </source>
</evidence>
<evidence type="ECO:0000269" key="5">
    <source>
    </source>
</evidence>
<evidence type="ECO:0000305" key="6"/>
<comment type="function">
    <text evidence="1 2 5">May play a role in the maintenance of heart function mediated, at least in part, through cAMP-binding. May play a role in the regulation of KCNK2-mediated current amplitude (By similarity).</text>
</comment>
<comment type="subcellular location">
    <subcellularLocation>
        <location evidence="6">Membrane</location>
        <topology evidence="6">Multi-pass membrane protein</topology>
    </subcellularLocation>
</comment>
<comment type="alternative products">
    <event type="alternative splicing"/>
    <isoform>
        <id>Q9DG25-1</id>
        <name>1</name>
        <name>POP3A</name>
        <sequence type="displayed"/>
    </isoform>
    <isoform>
        <id>Q9DG25-2</id>
        <name>2</name>
        <name>POP3B</name>
        <sequence type="not described"/>
    </isoform>
</comment>
<comment type="tissue specificity">
    <text evidence="5">Expressed first preferentially in atrium and later also in the subepicardial compact layer of the ventricles.</text>
</comment>
<comment type="developmental stage">
    <text evidence="5">Expression was first detected at HH stage 10 and was initially expressed throughout the heart. With heart looping at HH stage 11, expression was restricted to the atrial compartment and absent from the presumptive ventricular segments. The atrial-specific expression was still observed at stage 17. During HH stages 17-24, increased expression in the subepicardial compact layer was seen. At HH stage 30, expression was seen intensely in the whole myocardium with the exception of the outflow tract.</text>
</comment>
<comment type="similarity">
    <text evidence="6">Belongs to the popeye family.</text>
</comment>
<protein>
    <recommendedName>
        <fullName>Popeye domain-containing protein 3</fullName>
        <shortName>Popeye protein 3</shortName>
    </recommendedName>
</protein>
<proteinExistence type="evidence at transcript level"/>
<accession>Q9DG25</accession>
<keyword id="KW-0025">Alternative splicing</keyword>
<keyword id="KW-0114">cAMP</keyword>
<keyword id="KW-0116">cAMP-binding</keyword>
<keyword id="KW-0325">Glycoprotein</keyword>
<keyword id="KW-0472">Membrane</keyword>
<keyword id="KW-0547">Nucleotide-binding</keyword>
<keyword id="KW-1185">Reference proteome</keyword>
<keyword id="KW-0812">Transmembrane</keyword>
<keyword id="KW-1133">Transmembrane helix</keyword>
<organism>
    <name type="scientific">Gallus gallus</name>
    <name type="common">Chicken</name>
    <dbReference type="NCBI Taxonomy" id="9031"/>
    <lineage>
        <taxon>Eukaryota</taxon>
        <taxon>Metazoa</taxon>
        <taxon>Chordata</taxon>
        <taxon>Craniata</taxon>
        <taxon>Vertebrata</taxon>
        <taxon>Euteleostomi</taxon>
        <taxon>Archelosauria</taxon>
        <taxon>Archosauria</taxon>
        <taxon>Dinosauria</taxon>
        <taxon>Saurischia</taxon>
        <taxon>Theropoda</taxon>
        <taxon>Coelurosauria</taxon>
        <taxon>Aves</taxon>
        <taxon>Neognathae</taxon>
        <taxon>Galloanserae</taxon>
        <taxon>Galliformes</taxon>
        <taxon>Phasianidae</taxon>
        <taxon>Phasianinae</taxon>
        <taxon>Gallus</taxon>
    </lineage>
</organism>